<feature type="chain" id="PRO_0000392363" description="Anamorsin homolog">
    <location>
        <begin position="1"/>
        <end position="119"/>
    </location>
</feature>
<feature type="region of interest" description="Disordered" evidence="1">
    <location>
        <begin position="33"/>
        <end position="119"/>
    </location>
</feature>
<feature type="region of interest" description="Fe-S binding site A" evidence="1">
    <location>
        <begin position="42"/>
        <end position="54"/>
    </location>
</feature>
<feature type="region of interest" description="Fe-S binding site B" evidence="1">
    <location>
        <begin position="81"/>
        <end position="95"/>
    </location>
</feature>
<feature type="short sequence motif" description="Cx2C motif 1" evidence="1">
    <location>
        <begin position="81"/>
        <end position="84"/>
    </location>
</feature>
<feature type="short sequence motif" description="Cx2C motif 2" evidence="1">
    <location>
        <begin position="92"/>
        <end position="95"/>
    </location>
</feature>
<feature type="binding site" evidence="1">
    <location>
        <position position="42"/>
    </location>
    <ligand>
        <name>[2Fe-2S] cluster</name>
        <dbReference type="ChEBI" id="CHEBI:190135"/>
    </ligand>
</feature>
<feature type="binding site" evidence="1">
    <location>
        <position position="49"/>
    </location>
    <ligand>
        <name>[2Fe-2S] cluster</name>
        <dbReference type="ChEBI" id="CHEBI:190135"/>
    </ligand>
</feature>
<feature type="binding site" evidence="1">
    <location>
        <position position="52"/>
    </location>
    <ligand>
        <name>[2Fe-2S] cluster</name>
        <dbReference type="ChEBI" id="CHEBI:190135"/>
    </ligand>
</feature>
<feature type="binding site" evidence="1">
    <location>
        <position position="54"/>
    </location>
    <ligand>
        <name>[2Fe-2S] cluster</name>
        <dbReference type="ChEBI" id="CHEBI:190135"/>
    </ligand>
</feature>
<feature type="binding site" evidence="1">
    <location>
        <position position="81"/>
    </location>
    <ligand>
        <name>[4Fe-4S] cluster</name>
        <dbReference type="ChEBI" id="CHEBI:49883"/>
    </ligand>
</feature>
<feature type="binding site" evidence="1">
    <location>
        <position position="84"/>
    </location>
    <ligand>
        <name>[4Fe-4S] cluster</name>
        <dbReference type="ChEBI" id="CHEBI:49883"/>
    </ligand>
</feature>
<feature type="binding site" evidence="1">
    <location>
        <position position="92"/>
    </location>
    <ligand>
        <name>[4Fe-4S] cluster</name>
        <dbReference type="ChEBI" id="CHEBI:49883"/>
    </ligand>
</feature>
<feature type="binding site" evidence="1">
    <location>
        <position position="95"/>
    </location>
    <ligand>
        <name>[4Fe-4S] cluster</name>
        <dbReference type="ChEBI" id="CHEBI:49883"/>
    </ligand>
</feature>
<name>DRE2_LEIBR</name>
<sequence length="119" mass="12851">MSTPATTTQAFSLKTRQPIADEDALLTEEDRILKQATKGEDCTTRRRACKNCVCGRAELERKLEAEGKLPPEGITMPPGGCGNCAKGDAFRCANCPFLGQPAFDSTEDGKVKLNLTDDI</sequence>
<accession>A4H4W7</accession>
<evidence type="ECO:0000250" key="1">
    <source>
        <dbReference type="UniProtKB" id="P36152"/>
    </source>
</evidence>
<evidence type="ECO:0000250" key="2">
    <source>
        <dbReference type="UniProtKB" id="Q6FI81"/>
    </source>
</evidence>
<evidence type="ECO:0000305" key="3"/>
<comment type="function">
    <text evidence="1">Component of the cytosolic iron-sulfur (Fe-S) protein assembly (CIA) machinery. Required for the maturation of extramitochondrial Fe-S proteins. Part of an electron transfer chain functioning in an early step of cytosolic Fe-S biogenesis, facilitating the de novo assembly of a [4Fe-4S] cluster on the cytosolic Fe-S scaffold complex. Electrons are transferred from NADPH via a FAD- and FMN-containing diflavin oxidoreductase. Together with the diflavin oxidoreductase, also required for the assembly of the diferric tyrosyl radical cofactor of ribonucleotide reductase (RNR), probably by providing electrons for reduction during radical cofactor maturation in the catalytic small subunit.</text>
</comment>
<comment type="cofactor">
    <cofactor evidence="1">
        <name>[2Fe-2S] cluster</name>
        <dbReference type="ChEBI" id="CHEBI:190135"/>
    </cofactor>
</comment>
<comment type="cofactor">
    <cofactor evidence="1">
        <name>[4Fe-4S] cluster</name>
        <dbReference type="ChEBI" id="CHEBI:49883"/>
    </cofactor>
</comment>
<comment type="subunit">
    <text evidence="2">Monomer.</text>
</comment>
<comment type="subcellular location">
    <subcellularLocation>
        <location evidence="1">Cytoplasm</location>
    </subcellularLocation>
    <subcellularLocation>
        <location evidence="1">Mitochondrion intermembrane space</location>
    </subcellularLocation>
</comment>
<comment type="domain">
    <text evidence="1">The C-terminal domain binds 2 Fe-S clusters but is otherwise mostly in an intrinsically disordered conformation.</text>
</comment>
<comment type="domain">
    <text evidence="1">The twin Cx2C motifs are involved in the recognition by the mitochondrial MIA40-ERV1 disulfide relay system. The formation of 2 disulfide bonds in the Cx2C motifs through dithiol/disulfide exchange reactions effectively traps the protein in the mitochondrial intermembrane space.</text>
</comment>
<comment type="similarity">
    <text evidence="3">Belongs to the anamorsin family.</text>
</comment>
<proteinExistence type="inferred from homology"/>
<protein>
    <recommendedName>
        <fullName>Anamorsin homolog</fullName>
    </recommendedName>
    <alternativeName>
        <fullName>Fe-S cluster assembly protein DRE2 homolog</fullName>
    </alternativeName>
</protein>
<keyword id="KW-0001">2Fe-2S</keyword>
<keyword id="KW-0004">4Fe-4S</keyword>
<keyword id="KW-0963">Cytoplasm</keyword>
<keyword id="KW-0408">Iron</keyword>
<keyword id="KW-0411">Iron-sulfur</keyword>
<keyword id="KW-0479">Metal-binding</keyword>
<keyword id="KW-0496">Mitochondrion</keyword>
<keyword id="KW-1185">Reference proteome</keyword>
<gene>
    <name type="ORF">LbrM07_V2.0230</name>
    <name type="ORF">LbrM_07_0230</name>
</gene>
<reference key="1">
    <citation type="journal article" date="2007" name="Nat. Genet.">
        <title>Comparative genomic analysis of three Leishmania species that cause diverse human disease.</title>
        <authorList>
            <person name="Peacock C.S."/>
            <person name="Seeger K."/>
            <person name="Harris D."/>
            <person name="Murphy L."/>
            <person name="Ruiz J.C."/>
            <person name="Quail M.A."/>
            <person name="Peters N."/>
            <person name="Adlem E."/>
            <person name="Tivey A."/>
            <person name="Aslett M."/>
            <person name="Kerhornou A."/>
            <person name="Ivens A."/>
            <person name="Fraser A."/>
            <person name="Rajandream M.-A."/>
            <person name="Carver T."/>
            <person name="Norbertczak H."/>
            <person name="Chillingworth T."/>
            <person name="Hance Z."/>
            <person name="Jagels K."/>
            <person name="Moule S."/>
            <person name="Ormond D."/>
            <person name="Rutter S."/>
            <person name="Sqaures R."/>
            <person name="Whitehead S."/>
            <person name="Rabbinowitsch E."/>
            <person name="Arrowsmith C."/>
            <person name="White B."/>
            <person name="Thurston S."/>
            <person name="Bringaud F."/>
            <person name="Baldauf S.L."/>
            <person name="Faulconbridge A."/>
            <person name="Jeffares D."/>
            <person name="Depledge D.P."/>
            <person name="Oyola S.O."/>
            <person name="Hilley J.D."/>
            <person name="Brito L.O."/>
            <person name="Tosi L.R.O."/>
            <person name="Barrell B."/>
            <person name="Cruz A.K."/>
            <person name="Mottram J.C."/>
            <person name="Smith D.F."/>
            <person name="Berriman M."/>
        </authorList>
    </citation>
    <scope>NUCLEOTIDE SEQUENCE [LARGE SCALE GENOMIC DNA]</scope>
    <source>
        <strain>MHOM/BR/75/M2904</strain>
    </source>
</reference>
<dbReference type="EMBL" id="FR798981">
    <property type="protein sequence ID" value="CAM41635.1"/>
    <property type="molecule type" value="Genomic_DNA"/>
</dbReference>
<dbReference type="RefSeq" id="XP_001562519.1">
    <property type="nucleotide sequence ID" value="XM_001562469.1"/>
</dbReference>
<dbReference type="STRING" id="5660.A4H4W7"/>
<dbReference type="GeneID" id="5412898"/>
<dbReference type="KEGG" id="lbz:LBRM_07_0230"/>
<dbReference type="VEuPathDB" id="TriTrypDB:LbrM.07.0230"/>
<dbReference type="InParanoid" id="A4H4W7"/>
<dbReference type="OMA" id="TMPPGGC"/>
<dbReference type="Proteomes" id="UP000007258">
    <property type="component" value="Chromosome 7"/>
</dbReference>
<dbReference type="GO" id="GO:0005758">
    <property type="term" value="C:mitochondrial intermembrane space"/>
    <property type="evidence" value="ECO:0007669"/>
    <property type="project" value="UniProtKB-SubCell"/>
</dbReference>
<dbReference type="GO" id="GO:0051537">
    <property type="term" value="F:2 iron, 2 sulfur cluster binding"/>
    <property type="evidence" value="ECO:0007669"/>
    <property type="project" value="UniProtKB-KW"/>
</dbReference>
<dbReference type="GO" id="GO:0051539">
    <property type="term" value="F:4 iron, 4 sulfur cluster binding"/>
    <property type="evidence" value="ECO:0007669"/>
    <property type="project" value="UniProtKB-KW"/>
</dbReference>
<dbReference type="GO" id="GO:0046872">
    <property type="term" value="F:metal ion binding"/>
    <property type="evidence" value="ECO:0007669"/>
    <property type="project" value="UniProtKB-KW"/>
</dbReference>
<dbReference type="GO" id="GO:0016226">
    <property type="term" value="P:iron-sulfur cluster assembly"/>
    <property type="evidence" value="ECO:0007669"/>
    <property type="project" value="InterPro"/>
</dbReference>
<dbReference type="InterPro" id="IPR007785">
    <property type="entry name" value="Anamorsin"/>
</dbReference>
<dbReference type="InterPro" id="IPR046408">
    <property type="entry name" value="CIAPIN1"/>
</dbReference>
<dbReference type="PANTHER" id="PTHR13273">
    <property type="entry name" value="ANAMORSIN"/>
    <property type="match status" value="1"/>
</dbReference>
<dbReference type="PANTHER" id="PTHR13273:SF14">
    <property type="entry name" value="ANAMORSIN"/>
    <property type="match status" value="1"/>
</dbReference>
<dbReference type="Pfam" id="PF05093">
    <property type="entry name" value="CIAPIN1"/>
    <property type="match status" value="1"/>
</dbReference>
<organism>
    <name type="scientific">Leishmania braziliensis</name>
    <dbReference type="NCBI Taxonomy" id="5660"/>
    <lineage>
        <taxon>Eukaryota</taxon>
        <taxon>Discoba</taxon>
        <taxon>Euglenozoa</taxon>
        <taxon>Kinetoplastea</taxon>
        <taxon>Metakinetoplastina</taxon>
        <taxon>Trypanosomatida</taxon>
        <taxon>Trypanosomatidae</taxon>
        <taxon>Leishmaniinae</taxon>
        <taxon>Leishmania</taxon>
        <taxon>Leishmania braziliensis species complex</taxon>
    </lineage>
</organism>